<dbReference type="EC" id="3.1.26.5" evidence="3 4"/>
<dbReference type="EMBL" id="AC005825">
    <property type="protein sequence ID" value="AAD24622.1"/>
    <property type="status" value="ALT_SEQ"/>
    <property type="molecule type" value="Genomic_DNA"/>
</dbReference>
<dbReference type="EMBL" id="CP002685">
    <property type="protein sequence ID" value="AEC06522.1"/>
    <property type="molecule type" value="Genomic_DNA"/>
</dbReference>
<dbReference type="EMBL" id="AK175948">
    <property type="protein sequence ID" value="BAD43711.1"/>
    <property type="molecule type" value="mRNA"/>
</dbReference>
<dbReference type="PIR" id="E84542">
    <property type="entry name" value="E84542"/>
</dbReference>
<dbReference type="RefSeq" id="NP_179256.3">
    <property type="nucleotide sequence ID" value="NM_127217.4"/>
</dbReference>
<dbReference type="PDB" id="5DIZ">
    <property type="method" value="X-ray"/>
    <property type="resolution" value="3.20 A"/>
    <property type="chains" value="A/B=1-528"/>
</dbReference>
<dbReference type="PDB" id="5FT9">
    <property type="method" value="X-ray"/>
    <property type="resolution" value="3.05 A"/>
    <property type="chains" value="A/B=2-528"/>
</dbReference>
<dbReference type="PDBsum" id="5DIZ"/>
<dbReference type="PDBsum" id="5FT9"/>
<dbReference type="SMR" id="Q680B9"/>
<dbReference type="FunCoup" id="Q680B9">
    <property type="interactions" value="2211"/>
</dbReference>
<dbReference type="STRING" id="3702.Q680B9"/>
<dbReference type="iPTMnet" id="Q680B9"/>
<dbReference type="PaxDb" id="3702-AT2G16650.1"/>
<dbReference type="ProteomicsDB" id="226476"/>
<dbReference type="EnsemblPlants" id="AT2G16650.1">
    <property type="protein sequence ID" value="AT2G16650.1"/>
    <property type="gene ID" value="AT2G16650"/>
</dbReference>
<dbReference type="GeneID" id="816166"/>
<dbReference type="Gramene" id="AT2G16650.1">
    <property type="protein sequence ID" value="AT2G16650.1"/>
    <property type="gene ID" value="AT2G16650"/>
</dbReference>
<dbReference type="KEGG" id="ath:AT2G16650"/>
<dbReference type="Araport" id="AT2G16650"/>
<dbReference type="TAIR" id="AT2G16650">
    <property type="gene designation" value="PRORP2"/>
</dbReference>
<dbReference type="eggNOG" id="KOG1347">
    <property type="taxonomic scope" value="Eukaryota"/>
</dbReference>
<dbReference type="HOGENOM" id="CLU_014066_2_0_1"/>
<dbReference type="InParanoid" id="Q680B9"/>
<dbReference type="OMA" id="ASHGCEQ"/>
<dbReference type="OrthoDB" id="46913at2759"/>
<dbReference type="PhylomeDB" id="Q680B9"/>
<dbReference type="BRENDA" id="3.1.26.5">
    <property type="organism ID" value="399"/>
</dbReference>
<dbReference type="EvolutionaryTrace" id="Q680B9"/>
<dbReference type="PRO" id="PR:Q680B9"/>
<dbReference type="Proteomes" id="UP000006548">
    <property type="component" value="Chromosome 2"/>
</dbReference>
<dbReference type="ExpressionAtlas" id="Q680B9">
    <property type="expression patterns" value="baseline and differential"/>
</dbReference>
<dbReference type="GO" id="GO:0005634">
    <property type="term" value="C:nucleus"/>
    <property type="evidence" value="ECO:0000314"/>
    <property type="project" value="TAIR"/>
</dbReference>
<dbReference type="GO" id="GO:0046872">
    <property type="term" value="F:metal ion binding"/>
    <property type="evidence" value="ECO:0007669"/>
    <property type="project" value="UniProtKB-KW"/>
</dbReference>
<dbReference type="GO" id="GO:0004526">
    <property type="term" value="F:ribonuclease P activity"/>
    <property type="evidence" value="ECO:0000314"/>
    <property type="project" value="TAIR"/>
</dbReference>
<dbReference type="GO" id="GO:0006397">
    <property type="term" value="P:mRNA processing"/>
    <property type="evidence" value="ECO:0000315"/>
    <property type="project" value="TAIR"/>
</dbReference>
<dbReference type="GO" id="GO:0043144">
    <property type="term" value="P:sno(s)RNA processing"/>
    <property type="evidence" value="ECO:0000315"/>
    <property type="project" value="TAIR"/>
</dbReference>
<dbReference type="GO" id="GO:0001682">
    <property type="term" value="P:tRNA 5'-leader removal"/>
    <property type="evidence" value="ECO:0000314"/>
    <property type="project" value="TAIR"/>
</dbReference>
<dbReference type="CDD" id="cd18671">
    <property type="entry name" value="PIN_PRORP-Zc3h12a-like"/>
    <property type="match status" value="1"/>
</dbReference>
<dbReference type="FunFam" id="1.25.40.10:FF:000631">
    <property type="entry name" value="Proteinaceous RNase P 2"/>
    <property type="match status" value="1"/>
</dbReference>
<dbReference type="FunFam" id="3.40.50.11980:FF:000002">
    <property type="entry name" value="Proteinaceous RNase P 2"/>
    <property type="match status" value="1"/>
</dbReference>
<dbReference type="Gene3D" id="3.40.50.11980">
    <property type="match status" value="1"/>
</dbReference>
<dbReference type="Gene3D" id="1.25.40.10">
    <property type="entry name" value="Tetratricopeptide repeat domain"/>
    <property type="match status" value="1"/>
</dbReference>
<dbReference type="InterPro" id="IPR033443">
    <property type="entry name" value="PROP1-like_PPR_dom"/>
</dbReference>
<dbReference type="InterPro" id="IPR031595">
    <property type="entry name" value="PRORP_C"/>
</dbReference>
<dbReference type="InterPro" id="IPR011990">
    <property type="entry name" value="TPR-like_helical_dom_sf"/>
</dbReference>
<dbReference type="PANTHER" id="PTHR13547">
    <property type="match status" value="1"/>
</dbReference>
<dbReference type="PANTHER" id="PTHR13547:SF13">
    <property type="entry name" value="PROTEINACEOUS RNASE P 2"/>
    <property type="match status" value="1"/>
</dbReference>
<dbReference type="Pfam" id="PF17177">
    <property type="entry name" value="PPR_long"/>
    <property type="match status" value="1"/>
</dbReference>
<dbReference type="Pfam" id="PF16953">
    <property type="entry name" value="PRORP"/>
    <property type="match status" value="1"/>
</dbReference>
<comment type="function">
    <text evidence="3 4">Endonuclease RNase P responsible for the 5' maturation of tRNA precursors (PubMed:22549728, PubMed:26655022). Preferentially binds precursor tRNAs containing short 5' leaders and 3' trailers (PubMed:26655022). Also involved in the maturation of mRNA and small nucleolar RNA (snoRNA) (PubMed:22549728).</text>
</comment>
<comment type="catalytic activity">
    <reaction evidence="3 4">
        <text>Endonucleolytic cleavage of RNA, removing 5'-extranucleotides from tRNA precursor.</text>
        <dbReference type="EC" id="3.1.26.5"/>
    </reaction>
</comment>
<comment type="cofactor">
    <cofactor evidence="4">
        <name>Mg(2+)</name>
        <dbReference type="ChEBI" id="CHEBI:18420"/>
    </cofactor>
    <text evidence="4">Binds 2 Mg(2+) ions per subunit.</text>
</comment>
<comment type="subunit">
    <text evidence="4">Monomer; forms dimers in crystallo but monomers in solution (PubMed:26655022).</text>
</comment>
<comment type="subcellular location">
    <subcellularLocation>
        <location evidence="2">Nucleus</location>
    </subcellularLocation>
</comment>
<comment type="disruption phenotype">
    <text evidence="3">No visible phenotype; due to the redundancy with PRORP3. Prorp2 and prorp3 double mutant is lethal.</text>
</comment>
<comment type="similarity">
    <text evidence="5">Belongs to the PPR family. P subfamily.</text>
</comment>
<comment type="sequence caution" evidence="5">
    <conflict type="erroneous gene model prediction">
        <sequence resource="EMBL-CDS" id="AAD24622"/>
    </conflict>
</comment>
<name>PRRP2_ARATH</name>
<accession>Q680B9</accession>
<accession>Q9SLF2</accession>
<organism>
    <name type="scientific">Arabidopsis thaliana</name>
    <name type="common">Mouse-ear cress</name>
    <dbReference type="NCBI Taxonomy" id="3702"/>
    <lineage>
        <taxon>Eukaryota</taxon>
        <taxon>Viridiplantae</taxon>
        <taxon>Streptophyta</taxon>
        <taxon>Embryophyta</taxon>
        <taxon>Tracheophyta</taxon>
        <taxon>Spermatophyta</taxon>
        <taxon>Magnoliopsida</taxon>
        <taxon>eudicotyledons</taxon>
        <taxon>Gunneridae</taxon>
        <taxon>Pentapetalae</taxon>
        <taxon>rosids</taxon>
        <taxon>malvids</taxon>
        <taxon>Brassicales</taxon>
        <taxon>Brassicaceae</taxon>
        <taxon>Camelineae</taxon>
        <taxon>Arabidopsis</taxon>
    </lineage>
</organism>
<protein>
    <recommendedName>
        <fullName>Proteinaceous RNase P 2</fullName>
        <ecNumber evidence="3 4">3.1.26.5</ecNumber>
    </recommendedName>
</protein>
<proteinExistence type="evidence at protein level"/>
<gene>
    <name type="primary">PRORP2</name>
    <name type="ordered locus">At2g16650</name>
    <name type="ORF">T24I21.6</name>
</gene>
<reference key="1">
    <citation type="journal article" date="1999" name="Nature">
        <title>Sequence and analysis of chromosome 2 of the plant Arabidopsis thaliana.</title>
        <authorList>
            <person name="Lin X."/>
            <person name="Kaul S."/>
            <person name="Rounsley S.D."/>
            <person name="Shea T.P."/>
            <person name="Benito M.-I."/>
            <person name="Town C.D."/>
            <person name="Fujii C.Y."/>
            <person name="Mason T.M."/>
            <person name="Bowman C.L."/>
            <person name="Barnstead M.E."/>
            <person name="Feldblyum T.V."/>
            <person name="Buell C.R."/>
            <person name="Ketchum K.A."/>
            <person name="Lee J.J."/>
            <person name="Ronning C.M."/>
            <person name="Koo H.L."/>
            <person name="Moffat K.S."/>
            <person name="Cronin L.A."/>
            <person name="Shen M."/>
            <person name="Pai G."/>
            <person name="Van Aken S."/>
            <person name="Umayam L."/>
            <person name="Tallon L.J."/>
            <person name="Gill J.E."/>
            <person name="Adams M.D."/>
            <person name="Carrera A.J."/>
            <person name="Creasy T.H."/>
            <person name="Goodman H.M."/>
            <person name="Somerville C.R."/>
            <person name="Copenhaver G.P."/>
            <person name="Preuss D."/>
            <person name="Nierman W.C."/>
            <person name="White O."/>
            <person name="Eisen J.A."/>
            <person name="Salzberg S.L."/>
            <person name="Fraser C.M."/>
            <person name="Venter J.C."/>
        </authorList>
    </citation>
    <scope>NUCLEOTIDE SEQUENCE [LARGE SCALE GENOMIC DNA]</scope>
    <source>
        <strain>cv. Columbia</strain>
    </source>
</reference>
<reference key="2">
    <citation type="journal article" date="2017" name="Plant J.">
        <title>Araport11: a complete reannotation of the Arabidopsis thaliana reference genome.</title>
        <authorList>
            <person name="Cheng C.Y."/>
            <person name="Krishnakumar V."/>
            <person name="Chan A.P."/>
            <person name="Thibaud-Nissen F."/>
            <person name="Schobel S."/>
            <person name="Town C.D."/>
        </authorList>
    </citation>
    <scope>GENOME REANNOTATION</scope>
    <source>
        <strain>cv. Columbia</strain>
    </source>
</reference>
<reference key="3">
    <citation type="submission" date="2004-09" db="EMBL/GenBank/DDBJ databases">
        <title>Large-scale analysis of RIKEN Arabidopsis full-length (RAFL) cDNAs.</title>
        <authorList>
            <person name="Totoki Y."/>
            <person name="Seki M."/>
            <person name="Ishida J."/>
            <person name="Nakajima M."/>
            <person name="Enju A."/>
            <person name="Kamiya A."/>
            <person name="Narusaka M."/>
            <person name="Shin-i T."/>
            <person name="Nakagawa M."/>
            <person name="Sakamoto N."/>
            <person name="Oishi K."/>
            <person name="Kohara Y."/>
            <person name="Kobayashi M."/>
            <person name="Toyoda A."/>
            <person name="Sakaki Y."/>
            <person name="Sakurai T."/>
            <person name="Iida K."/>
            <person name="Akiyama K."/>
            <person name="Satou M."/>
            <person name="Toyoda T."/>
            <person name="Konagaya A."/>
            <person name="Carninci P."/>
            <person name="Kawai J."/>
            <person name="Hayashizaki Y."/>
            <person name="Shinozaki K."/>
        </authorList>
    </citation>
    <scope>NUCLEOTIDE SEQUENCE [LARGE SCALE MRNA]</scope>
    <source>
        <strain>cv. Columbia</strain>
    </source>
</reference>
<reference key="4">
    <citation type="journal article" date="2010" name="Nat. Struct. Mol. Biol.">
        <title>A single Arabidopsis organellar protein has RNase P activity.</title>
        <authorList>
            <person name="Gobert A."/>
            <person name="Gutmann B."/>
            <person name="Taschner A."/>
            <person name="Goessringer M."/>
            <person name="Holzmann J."/>
            <person name="Hartmann R.K."/>
            <person name="Rossmanith W."/>
            <person name="Giege P."/>
        </authorList>
    </citation>
    <scope>IDENTIFICATION</scope>
    <scope>SUBCELLULAR LOCATION</scope>
</reference>
<reference key="5">
    <citation type="journal article" date="2012" name="Genes Dev.">
        <title>PRORP proteins support RNase P activity in both organelles and the nucleus in Arabidopsis.</title>
        <authorList>
            <person name="Gutmann B."/>
            <person name="Gobert A."/>
            <person name="Giege P."/>
        </authorList>
    </citation>
    <scope>FUNCTION</scope>
    <scope>CATALYTIC ACTIVITY</scope>
    <scope>DISRUPTION PHENOTYPE</scope>
    <scope>MUTAGENESIS OF 421-ASP-ASP-422</scope>
</reference>
<reference evidence="7" key="6">
    <citation type="journal article" date="2016" name="J. Mol. Biol.">
        <title>Nuclear protein-only ribonuclease P2 structure and Biochemical characterization provide insight into the conserved properties of tRNA 5' End processing enzymes.</title>
        <authorList>
            <person name="Karasik A."/>
            <person name="Shanmuganathan A."/>
            <person name="Howard M.J."/>
            <person name="Fierke C.A."/>
            <person name="Koutmos M."/>
        </authorList>
    </citation>
    <scope>X-RAY CRYSTALLOGRAPHY (3.20 ANGSTROMS) IN COMPLEX WITH ZINC</scope>
    <scope>FUNCTION</scope>
    <scope>CATALYTIC ACTIVITY</scope>
    <scope>COFACTOR</scope>
    <scope>SUBUNIT</scope>
    <scope>MUTAGENESIS OF ASP-343; ASP-421; ASP-422; ASP-440 AND HIS-445</scope>
</reference>
<sequence>MAASDQHRSRRHDESSSRPNKKKKVSRNPETNLLFNLNSCSKSKDLSAALALYDAAITSSEVRLSQQHFQTLLYLCSASITDISLQYLAIDRGFEIFDRMVSSGISPNEASVTSVARLAAAKGNGDYAFKVVKEFVSVGGVSIPRLRTYAPALLCFCEKLEAEKGYEVEEHMEAAGIALEEAEISALLKVSAATGRENKVYRYLHKLREYVGCVSEETLKIIEEWFCGEKAGEVGDNGIGSDVGMLREAVLNNGGGWHGHGWVGEGKWTVKKGNVSSTGRCLSCSEQLACVDTNEVETQKFVDSLVALAMDRKTKMNSCETNVVFSEFQDWLEKHGDYEAIVDGANIGLYQQNFVDGSFSLSQLESVMKELYRESGNNKWPLILLHKRRVKTLLENPTHRNLVEEWISNGVLYATPPGSNDDWYWLYAAAKLKCLLVTNDEMRDHIFELLGSTFFQKWKERHQVRYTFVKGNLKLEMPSPFSVVIQESEKGSWHFPVSCENNEESSRTWMCISRQSILDSPKSNGKIP</sequence>
<evidence type="ECO:0000256" key="1">
    <source>
        <dbReference type="SAM" id="MobiDB-lite"/>
    </source>
</evidence>
<evidence type="ECO:0000269" key="2">
    <source>
    </source>
</evidence>
<evidence type="ECO:0000269" key="3">
    <source>
    </source>
</evidence>
<evidence type="ECO:0000269" key="4">
    <source>
    </source>
</evidence>
<evidence type="ECO:0000305" key="5"/>
<evidence type="ECO:0000305" key="6">
    <source>
    </source>
</evidence>
<evidence type="ECO:0007744" key="7">
    <source>
        <dbReference type="PDB" id="5DIZ"/>
    </source>
</evidence>
<evidence type="ECO:0007829" key="8">
    <source>
        <dbReference type="PDB" id="5DIZ"/>
    </source>
</evidence>
<evidence type="ECO:0007829" key="9">
    <source>
        <dbReference type="PDB" id="5FT9"/>
    </source>
</evidence>
<feature type="chain" id="PRO_0000420273" description="Proteinaceous RNase P 2">
    <location>
        <begin position="1"/>
        <end position="528"/>
    </location>
</feature>
<feature type="repeat" description="PPR 1">
    <location>
        <begin position="29"/>
        <end position="64"/>
    </location>
</feature>
<feature type="repeat" description="PPR 2">
    <location>
        <begin position="72"/>
        <end position="107"/>
    </location>
</feature>
<feature type="repeat" description="PPR 3">
    <location>
        <begin position="108"/>
        <end position="142"/>
    </location>
</feature>
<feature type="repeat" description="PPR 4">
    <location>
        <begin position="145"/>
        <end position="179"/>
    </location>
</feature>
<feature type="domain" description="PRORP">
    <location>
        <begin position="275"/>
        <end position="511"/>
    </location>
</feature>
<feature type="region of interest" description="Disordered" evidence="1">
    <location>
        <begin position="1"/>
        <end position="28"/>
    </location>
</feature>
<feature type="compositionally biased region" description="Basic and acidic residues" evidence="1">
    <location>
        <begin position="1"/>
        <end position="16"/>
    </location>
</feature>
<feature type="binding site" evidence="4 7">
    <location>
        <position position="281"/>
    </location>
    <ligand>
        <name>Zn(2+)</name>
        <dbReference type="ChEBI" id="CHEBI:29105"/>
    </ligand>
</feature>
<feature type="binding site" evidence="4 7">
    <location>
        <position position="284"/>
    </location>
    <ligand>
        <name>Zn(2+)</name>
        <dbReference type="ChEBI" id="CHEBI:29105"/>
    </ligand>
</feature>
<feature type="binding site" evidence="6">
    <location>
        <position position="343"/>
    </location>
    <ligand>
        <name>Mg(2+)</name>
        <dbReference type="ChEBI" id="CHEBI:18420"/>
        <label>1</label>
        <note>catalytic</note>
    </ligand>
</feature>
<feature type="binding site" evidence="6">
    <location>
        <position position="421"/>
    </location>
    <ligand>
        <name>Mg(2+)</name>
        <dbReference type="ChEBI" id="CHEBI:18420"/>
        <label>1</label>
        <note>catalytic</note>
    </ligand>
</feature>
<feature type="binding site" evidence="6">
    <location>
        <position position="422"/>
    </location>
    <ligand>
        <name>Mg(2+)</name>
        <dbReference type="ChEBI" id="CHEBI:18420"/>
        <label>2</label>
        <note>catalytic</note>
    </ligand>
</feature>
<feature type="binding site" evidence="6">
    <location>
        <position position="440"/>
    </location>
    <ligand>
        <name>Mg(2+)</name>
        <dbReference type="ChEBI" id="CHEBI:18420"/>
        <label>2</label>
        <note>catalytic</note>
    </ligand>
</feature>
<feature type="binding site" evidence="4 7">
    <location>
        <position position="494"/>
    </location>
    <ligand>
        <name>Zn(2+)</name>
        <dbReference type="ChEBI" id="CHEBI:29105"/>
    </ligand>
</feature>
<feature type="binding site" evidence="4 7">
    <location>
        <position position="511"/>
    </location>
    <ligand>
        <name>Zn(2+)</name>
        <dbReference type="ChEBI" id="CHEBI:29105"/>
    </ligand>
</feature>
<feature type="mutagenesis site" description="Abolishes ribonuclease activity." evidence="4">
    <original>D</original>
    <variation>A</variation>
    <location>
        <position position="343"/>
    </location>
</feature>
<feature type="mutagenesis site" description="Loss of activity." evidence="3">
    <original>DD</original>
    <variation>AA</variation>
    <location>
        <begin position="421"/>
        <end position="422"/>
    </location>
</feature>
<feature type="mutagenesis site" description="Abolishes ribonuclease activity." evidence="4">
    <original>D</original>
    <variation>A</variation>
    <location>
        <position position="421"/>
    </location>
</feature>
<feature type="mutagenesis site" description="Abolishes ribonuclease activity." evidence="4">
    <original>D</original>
    <variation>A</variation>
    <location>
        <position position="422"/>
    </location>
</feature>
<feature type="mutagenesis site" description="Abolishes ribonuclease activity." evidence="4">
    <original>D</original>
    <variation>A</variation>
    <location>
        <position position="440"/>
    </location>
</feature>
<feature type="mutagenesis site" description="Abolishes ribonuclease activity." evidence="4">
    <original>H</original>
    <variation>A</variation>
    <location>
        <position position="445"/>
    </location>
</feature>
<feature type="helix" evidence="9">
    <location>
        <begin position="29"/>
        <end position="43"/>
    </location>
</feature>
<feature type="helix" evidence="9">
    <location>
        <begin position="46"/>
        <end position="59"/>
    </location>
</feature>
<feature type="helix" evidence="9">
    <location>
        <begin position="67"/>
        <end position="81"/>
    </location>
</feature>
<feature type="turn" evidence="8">
    <location>
        <begin position="83"/>
        <end position="85"/>
    </location>
</feature>
<feature type="helix" evidence="9">
    <location>
        <begin position="86"/>
        <end position="101"/>
    </location>
</feature>
<feature type="turn" evidence="9">
    <location>
        <begin position="102"/>
        <end position="104"/>
    </location>
</feature>
<feature type="helix" evidence="9">
    <location>
        <begin position="109"/>
        <end position="121"/>
    </location>
</feature>
<feature type="helix" evidence="9">
    <location>
        <begin position="125"/>
        <end position="138"/>
    </location>
</feature>
<feature type="helix" evidence="9">
    <location>
        <begin position="146"/>
        <end position="158"/>
    </location>
</feature>
<feature type="helix" evidence="9">
    <location>
        <begin position="162"/>
        <end position="175"/>
    </location>
</feature>
<feature type="helix" evidence="9">
    <location>
        <begin position="181"/>
        <end position="193"/>
    </location>
</feature>
<feature type="helix" evidence="9">
    <location>
        <begin position="197"/>
        <end position="210"/>
    </location>
</feature>
<feature type="strand" evidence="9">
    <location>
        <begin position="212"/>
        <end position="214"/>
    </location>
</feature>
<feature type="helix" evidence="9">
    <location>
        <begin position="216"/>
        <end position="226"/>
    </location>
</feature>
<feature type="helix" evidence="9">
    <location>
        <begin position="229"/>
        <end position="234"/>
    </location>
</feature>
<feature type="helix" evidence="9">
    <location>
        <begin position="243"/>
        <end position="252"/>
    </location>
</feature>
<feature type="strand" evidence="8">
    <location>
        <begin position="264"/>
        <end position="266"/>
    </location>
</feature>
<feature type="strand" evidence="9">
    <location>
        <begin position="269"/>
        <end position="273"/>
    </location>
</feature>
<feature type="strand" evidence="8">
    <location>
        <begin position="279"/>
        <end position="281"/>
    </location>
</feature>
<feature type="turn" evidence="9">
    <location>
        <begin position="282"/>
        <end position="284"/>
    </location>
</feature>
<feature type="helix" evidence="9">
    <location>
        <begin position="295"/>
        <end position="310"/>
    </location>
</feature>
<feature type="helix" evidence="9">
    <location>
        <begin position="323"/>
        <end position="335"/>
    </location>
</feature>
<feature type="strand" evidence="9">
    <location>
        <begin position="339"/>
        <end position="343"/>
    </location>
</feature>
<feature type="helix" evidence="9">
    <location>
        <begin position="344"/>
        <end position="349"/>
    </location>
</feature>
<feature type="strand" evidence="9">
    <location>
        <begin position="350"/>
        <end position="352"/>
    </location>
</feature>
<feature type="strand" evidence="9">
    <location>
        <begin position="354"/>
        <end position="356"/>
    </location>
</feature>
<feature type="helix" evidence="9">
    <location>
        <begin position="361"/>
        <end position="375"/>
    </location>
</feature>
<feature type="strand" evidence="9">
    <location>
        <begin position="382"/>
        <end position="386"/>
    </location>
</feature>
<feature type="helix" evidence="9">
    <location>
        <begin position="387"/>
        <end position="395"/>
    </location>
</feature>
<feature type="helix" evidence="9">
    <location>
        <begin position="397"/>
        <end position="409"/>
    </location>
</feature>
<feature type="strand" evidence="9">
    <location>
        <begin position="411"/>
        <end position="415"/>
    </location>
</feature>
<feature type="strand" evidence="8">
    <location>
        <begin position="417"/>
        <end position="419"/>
    </location>
</feature>
<feature type="helix" evidence="9">
    <location>
        <begin position="423"/>
        <end position="431"/>
    </location>
</feature>
<feature type="strand" evidence="9">
    <location>
        <begin position="435"/>
        <end position="437"/>
    </location>
</feature>
<feature type="helix" evidence="9">
    <location>
        <begin position="445"/>
        <end position="450"/>
    </location>
</feature>
<feature type="helix" evidence="9">
    <location>
        <begin position="453"/>
        <end position="462"/>
    </location>
</feature>
<feature type="strand" evidence="9">
    <location>
        <begin position="463"/>
        <end position="467"/>
    </location>
</feature>
<feature type="strand" evidence="9">
    <location>
        <begin position="469"/>
        <end position="471"/>
    </location>
</feature>
<feature type="strand" evidence="9">
    <location>
        <begin position="474"/>
        <end position="476"/>
    </location>
</feature>
<feature type="strand" evidence="9">
    <location>
        <begin position="489"/>
        <end position="491"/>
    </location>
</feature>
<feature type="strand" evidence="9">
    <location>
        <begin position="493"/>
        <end position="497"/>
    </location>
</feature>
<feature type="strand" evidence="9">
    <location>
        <begin position="509"/>
        <end position="513"/>
    </location>
</feature>
<keyword id="KW-0002">3D-structure</keyword>
<keyword id="KW-0378">Hydrolase</keyword>
<keyword id="KW-0460">Magnesium</keyword>
<keyword id="KW-0464">Manganese</keyword>
<keyword id="KW-0479">Metal-binding</keyword>
<keyword id="KW-0540">Nuclease</keyword>
<keyword id="KW-0539">Nucleus</keyword>
<keyword id="KW-1185">Reference proteome</keyword>
<keyword id="KW-0677">Repeat</keyword>
<keyword id="KW-0819">tRNA processing</keyword>
<keyword id="KW-0862">Zinc</keyword>